<organism>
    <name type="scientific">Drosophila azteca</name>
    <name type="common">Fruit fly</name>
    <dbReference type="NCBI Taxonomy" id="7249"/>
    <lineage>
        <taxon>Eukaryota</taxon>
        <taxon>Metazoa</taxon>
        <taxon>Ecdysozoa</taxon>
        <taxon>Arthropoda</taxon>
        <taxon>Hexapoda</taxon>
        <taxon>Insecta</taxon>
        <taxon>Pterygota</taxon>
        <taxon>Neoptera</taxon>
        <taxon>Endopterygota</taxon>
        <taxon>Diptera</taxon>
        <taxon>Brachycera</taxon>
        <taxon>Muscomorpha</taxon>
        <taxon>Ephydroidea</taxon>
        <taxon>Drosophilidae</taxon>
        <taxon>Drosophila</taxon>
        <taxon>Sophophora</taxon>
    </lineage>
</organism>
<reference key="1">
    <citation type="journal article" date="1993" name="Mol. Biol. Evol.">
        <title>Relationships in the Drosophila obscura species group, inferred from mitochondrial cytochrome oxidase II sequences.</title>
        <authorList>
            <person name="Beckenbach A.T."/>
            <person name="Wei Y.W."/>
            <person name="Liu H."/>
        </authorList>
    </citation>
    <scope>NUCLEOTIDE SEQUENCE [GENOMIC DNA]</scope>
</reference>
<sequence>MSTWANLGLQDSASPLMEQLIFFHDHALLILVMITVLVGYLMFMLFFNSYVNRFLLHGQLIEMIWTILPAIILLFIAMPSLRLLYLLDEINEPSITLKSIGHQWYWSYEYSDFNNVEFDSYMIPTNELANDGFRLLDVDNRIVLPMNSQIRILVTAADVIHSWTVPALGVKVDGTPGRLNQTNFFINRPGLFYGQCSEICGANHSFMPIVIESVPVNYFIKWISNSVNS</sequence>
<geneLocation type="mitochondrion"/>
<feature type="chain" id="PRO_0000183576" description="Cytochrome c oxidase subunit 2">
    <location>
        <begin position="1"/>
        <end position="229"/>
    </location>
</feature>
<feature type="topological domain" description="Mitochondrial intermembrane" evidence="2">
    <location>
        <begin position="1"/>
        <end position="26"/>
    </location>
</feature>
<feature type="transmembrane region" description="Helical" evidence="2">
    <location>
        <begin position="27"/>
        <end position="48"/>
    </location>
</feature>
<feature type="topological domain" description="Mitochondrial matrix" evidence="2">
    <location>
        <begin position="49"/>
        <end position="62"/>
    </location>
</feature>
<feature type="transmembrane region" description="Helical" evidence="2">
    <location>
        <begin position="63"/>
        <end position="82"/>
    </location>
</feature>
<feature type="topological domain" description="Mitochondrial intermembrane" evidence="2">
    <location>
        <begin position="83"/>
        <end position="229"/>
    </location>
</feature>
<feature type="binding site" evidence="1">
    <location>
        <position position="161"/>
    </location>
    <ligand>
        <name>Cu cation</name>
        <dbReference type="ChEBI" id="CHEBI:23378"/>
        <label>A1</label>
    </ligand>
</feature>
<feature type="binding site" evidence="1">
    <location>
        <position position="196"/>
    </location>
    <ligand>
        <name>Cu cation</name>
        <dbReference type="ChEBI" id="CHEBI:23378"/>
        <label>A1</label>
    </ligand>
</feature>
<feature type="binding site" evidence="1">
    <location>
        <position position="196"/>
    </location>
    <ligand>
        <name>Cu cation</name>
        <dbReference type="ChEBI" id="CHEBI:23378"/>
        <label>A2</label>
    </ligand>
</feature>
<feature type="binding site" evidence="1">
    <location>
        <position position="198"/>
    </location>
    <ligand>
        <name>Cu cation</name>
        <dbReference type="ChEBI" id="CHEBI:23378"/>
        <label>A2</label>
    </ligand>
</feature>
<feature type="binding site" evidence="1">
    <location>
        <position position="198"/>
    </location>
    <ligand>
        <name>Mg(2+)</name>
        <dbReference type="ChEBI" id="CHEBI:18420"/>
        <note>ligand shared with subunit 1</note>
    </ligand>
</feature>
<feature type="binding site" evidence="1">
    <location>
        <position position="200"/>
    </location>
    <ligand>
        <name>Cu cation</name>
        <dbReference type="ChEBI" id="CHEBI:23378"/>
        <label>A1</label>
    </ligand>
</feature>
<feature type="binding site" evidence="1">
    <location>
        <position position="200"/>
    </location>
    <ligand>
        <name>Cu cation</name>
        <dbReference type="ChEBI" id="CHEBI:23378"/>
        <label>A2</label>
    </ligand>
</feature>
<feature type="binding site" evidence="1">
    <location>
        <position position="204"/>
    </location>
    <ligand>
        <name>Cu cation</name>
        <dbReference type="ChEBI" id="CHEBI:23378"/>
        <label>A2</label>
    </ligand>
</feature>
<feature type="binding site" evidence="1">
    <location>
        <position position="207"/>
    </location>
    <ligand>
        <name>Cu cation</name>
        <dbReference type="ChEBI" id="CHEBI:23378"/>
        <label>A1</label>
    </ligand>
</feature>
<keyword id="KW-0186">Copper</keyword>
<keyword id="KW-0249">Electron transport</keyword>
<keyword id="KW-0460">Magnesium</keyword>
<keyword id="KW-0472">Membrane</keyword>
<keyword id="KW-0479">Metal-binding</keyword>
<keyword id="KW-0496">Mitochondrion</keyword>
<keyword id="KW-0999">Mitochondrion inner membrane</keyword>
<keyword id="KW-0679">Respiratory chain</keyword>
<keyword id="KW-1278">Translocase</keyword>
<keyword id="KW-0812">Transmembrane</keyword>
<keyword id="KW-1133">Transmembrane helix</keyword>
<keyword id="KW-0813">Transport</keyword>
<gene>
    <name type="primary">mt:CoII</name>
    <name type="synonym">CoII</name>
</gene>
<comment type="function">
    <text evidence="1">Component of the cytochrome c oxidase, the last enzyme in the mitochondrial electron transport chain which drives oxidative phosphorylation. The respiratory chain contains 3 multisubunit complexes succinate dehydrogenase (complex II, CII), ubiquinol-cytochrome c oxidoreductase (cytochrome b-c1 complex, complex III, CIII) and cytochrome c oxidase (complex IV, CIV), that cooperate to transfer electrons derived from NADH and succinate to molecular oxygen, creating an electrochemical gradient over the inner membrane that drives transmembrane transport and the ATP synthase. Cytochrome c oxidase is the component of the respiratory chain that catalyzes the reduction of oxygen to water. Electrons originating from reduced cytochrome c in the intermembrane space (IMS) are transferred via the dinuclear copper A center (CU(A)) of subunit 2 and heme A of subunit 1 to the active site in subunit 1, a binuclear center (BNC) formed by heme A3 and copper B (CU(B)). The BNC reduces molecular oxygen to 2 water molecules using 4 electrons from cytochrome c in the IMS and 4 protons from the mitochondrial matrix.</text>
</comment>
<comment type="catalytic activity">
    <reaction evidence="1">
        <text>4 Fe(II)-[cytochrome c] + O2 + 8 H(+)(in) = 4 Fe(III)-[cytochrome c] + 2 H2O + 4 H(+)(out)</text>
        <dbReference type="Rhea" id="RHEA:11436"/>
        <dbReference type="Rhea" id="RHEA-COMP:10350"/>
        <dbReference type="Rhea" id="RHEA-COMP:14399"/>
        <dbReference type="ChEBI" id="CHEBI:15377"/>
        <dbReference type="ChEBI" id="CHEBI:15378"/>
        <dbReference type="ChEBI" id="CHEBI:15379"/>
        <dbReference type="ChEBI" id="CHEBI:29033"/>
        <dbReference type="ChEBI" id="CHEBI:29034"/>
        <dbReference type="EC" id="7.1.1.9"/>
    </reaction>
    <physiologicalReaction direction="left-to-right" evidence="1">
        <dbReference type="Rhea" id="RHEA:11437"/>
    </physiologicalReaction>
</comment>
<comment type="cofactor">
    <cofactor evidence="1">
        <name>Cu cation</name>
        <dbReference type="ChEBI" id="CHEBI:23378"/>
    </cofactor>
    <text evidence="1">Binds a dinuclear copper A center per subunit.</text>
</comment>
<comment type="subunit">
    <text evidence="1">Component of the cytochrome c oxidase (complex IV, CIV), a multisubunit enzyme composed of a catalytic core of 3 subunits and several supernumerary subunits. The complex exists as a monomer or a dimer and forms supercomplexes (SCs) in the inner mitochondrial membrane with ubiquinol-cytochrome c oxidoreductase (cytochrome b-c1 complex, complex III, CIII).</text>
</comment>
<comment type="subcellular location">
    <subcellularLocation>
        <location evidence="1">Mitochondrion inner membrane</location>
        <topology evidence="1">Multi-pass membrane protein</topology>
    </subcellularLocation>
</comment>
<comment type="similarity">
    <text evidence="3">Belongs to the cytochrome c oxidase subunit 2 family.</text>
</comment>
<proteinExistence type="inferred from homology"/>
<name>COX2_DROAZ</name>
<dbReference type="EC" id="7.1.1.9"/>
<dbReference type="EMBL" id="M95146">
    <property type="protein sequence ID" value="AAA02776.2"/>
    <property type="molecule type" value="Genomic_DNA"/>
</dbReference>
<dbReference type="SMR" id="P84287"/>
<dbReference type="GO" id="GO:0005743">
    <property type="term" value="C:mitochondrial inner membrane"/>
    <property type="evidence" value="ECO:0007669"/>
    <property type="project" value="UniProtKB-SubCell"/>
</dbReference>
<dbReference type="GO" id="GO:0005507">
    <property type="term" value="F:copper ion binding"/>
    <property type="evidence" value="ECO:0007669"/>
    <property type="project" value="InterPro"/>
</dbReference>
<dbReference type="GO" id="GO:0004129">
    <property type="term" value="F:cytochrome-c oxidase activity"/>
    <property type="evidence" value="ECO:0007669"/>
    <property type="project" value="UniProtKB-EC"/>
</dbReference>
<dbReference type="GO" id="GO:0042773">
    <property type="term" value="P:ATP synthesis coupled electron transport"/>
    <property type="evidence" value="ECO:0007669"/>
    <property type="project" value="TreeGrafter"/>
</dbReference>
<dbReference type="CDD" id="cd13912">
    <property type="entry name" value="CcO_II_C"/>
    <property type="match status" value="1"/>
</dbReference>
<dbReference type="FunFam" id="1.10.287.90:FF:000006">
    <property type="entry name" value="Cytochrome c oxidase subunit 2"/>
    <property type="match status" value="1"/>
</dbReference>
<dbReference type="FunFam" id="2.60.40.420:FF:000001">
    <property type="entry name" value="Cytochrome c oxidase subunit 2"/>
    <property type="match status" value="1"/>
</dbReference>
<dbReference type="Gene3D" id="1.10.287.90">
    <property type="match status" value="1"/>
</dbReference>
<dbReference type="Gene3D" id="2.60.40.420">
    <property type="entry name" value="Cupredoxins - blue copper proteins"/>
    <property type="match status" value="1"/>
</dbReference>
<dbReference type="InterPro" id="IPR045187">
    <property type="entry name" value="CcO_II"/>
</dbReference>
<dbReference type="InterPro" id="IPR002429">
    <property type="entry name" value="CcO_II-like_C"/>
</dbReference>
<dbReference type="InterPro" id="IPR034210">
    <property type="entry name" value="CcO_II_C"/>
</dbReference>
<dbReference type="InterPro" id="IPR001505">
    <property type="entry name" value="Copper_CuA"/>
</dbReference>
<dbReference type="InterPro" id="IPR008972">
    <property type="entry name" value="Cupredoxin"/>
</dbReference>
<dbReference type="InterPro" id="IPR014222">
    <property type="entry name" value="Cyt_c_oxidase_su2"/>
</dbReference>
<dbReference type="InterPro" id="IPR011759">
    <property type="entry name" value="Cyt_c_oxidase_su2_TM_dom"/>
</dbReference>
<dbReference type="InterPro" id="IPR036257">
    <property type="entry name" value="Cyt_c_oxidase_su2_TM_sf"/>
</dbReference>
<dbReference type="NCBIfam" id="TIGR02866">
    <property type="entry name" value="CoxB"/>
    <property type="match status" value="1"/>
</dbReference>
<dbReference type="PANTHER" id="PTHR22888:SF9">
    <property type="entry name" value="CYTOCHROME C OXIDASE SUBUNIT 2"/>
    <property type="match status" value="1"/>
</dbReference>
<dbReference type="PANTHER" id="PTHR22888">
    <property type="entry name" value="CYTOCHROME C OXIDASE, SUBUNIT II"/>
    <property type="match status" value="1"/>
</dbReference>
<dbReference type="Pfam" id="PF00116">
    <property type="entry name" value="COX2"/>
    <property type="match status" value="1"/>
</dbReference>
<dbReference type="Pfam" id="PF02790">
    <property type="entry name" value="COX2_TM"/>
    <property type="match status" value="1"/>
</dbReference>
<dbReference type="PRINTS" id="PR01166">
    <property type="entry name" value="CYCOXIDASEII"/>
</dbReference>
<dbReference type="SUPFAM" id="SSF49503">
    <property type="entry name" value="Cupredoxins"/>
    <property type="match status" value="1"/>
</dbReference>
<dbReference type="SUPFAM" id="SSF81464">
    <property type="entry name" value="Cytochrome c oxidase subunit II-like, transmembrane region"/>
    <property type="match status" value="1"/>
</dbReference>
<dbReference type="PROSITE" id="PS00078">
    <property type="entry name" value="COX2"/>
    <property type="match status" value="1"/>
</dbReference>
<dbReference type="PROSITE" id="PS50857">
    <property type="entry name" value="COX2_CUA"/>
    <property type="match status" value="1"/>
</dbReference>
<dbReference type="PROSITE" id="PS50999">
    <property type="entry name" value="COX2_TM"/>
    <property type="match status" value="1"/>
</dbReference>
<evidence type="ECO:0000250" key="1">
    <source>
        <dbReference type="UniProtKB" id="P00410"/>
    </source>
</evidence>
<evidence type="ECO:0000255" key="2"/>
<evidence type="ECO:0000305" key="3"/>
<accession>P84287</accession>
<accession>P29854</accession>
<accession>P29855</accession>
<accession>P29857</accession>
<accession>P29858</accession>
<protein>
    <recommendedName>
        <fullName>Cytochrome c oxidase subunit 2</fullName>
        <ecNumber>7.1.1.9</ecNumber>
    </recommendedName>
    <alternativeName>
        <fullName>Cytochrome c oxidase polypeptide II</fullName>
    </alternativeName>
</protein>